<gene>
    <name evidence="1" type="primary">trpR</name>
    <name type="ordered locus">CTA_0182</name>
</gene>
<name>TRPR_CHLTA</name>
<proteinExistence type="inferred from homology"/>
<feature type="chain" id="PRO_1000014037" description="Trp operon repressor homolog">
    <location>
        <begin position="1"/>
        <end position="94"/>
    </location>
</feature>
<feature type="DNA-binding region" evidence="1">
    <location>
        <begin position="58"/>
        <end position="81"/>
    </location>
</feature>
<reference key="1">
    <citation type="journal article" date="2005" name="Infect. Immun.">
        <title>Comparative genomic analysis of Chlamydia trachomatis oculotropic and genitotropic strains.</title>
        <authorList>
            <person name="Carlson J.H."/>
            <person name="Porcella S.F."/>
            <person name="McClarty G."/>
            <person name="Caldwell H.D."/>
        </authorList>
    </citation>
    <scope>NUCLEOTIDE SEQUENCE [LARGE SCALE GENOMIC DNA]</scope>
    <source>
        <strain>ATCC VR-571B / DSM 19440 / HAR-13</strain>
    </source>
</reference>
<evidence type="ECO:0000255" key="1">
    <source>
        <dbReference type="HAMAP-Rule" id="MF_00475"/>
    </source>
</evidence>
<comment type="function">
    <text evidence="1">This protein is an aporepressor. When complexed with L-tryptophan it binds the operator region of the trp operon and prevents the initiation of transcription.</text>
</comment>
<comment type="subunit">
    <text evidence="1">Homodimer.</text>
</comment>
<comment type="subcellular location">
    <subcellularLocation>
        <location evidence="1">Cytoplasm</location>
    </subcellularLocation>
</comment>
<comment type="similarity">
    <text evidence="1">Belongs to the TrpR family.</text>
</comment>
<accession>Q3KMJ6</accession>
<sequence>MKNQEESGWQAFLTLCSKMQKEKFLQDLFSLFLSFSERKDVASRYHIIRALLEGELTQREIAEKYGVSIAQITRGSNALKGLDPQFKEFLQKEI</sequence>
<keyword id="KW-0963">Cytoplasm</keyword>
<keyword id="KW-0238">DNA-binding</keyword>
<keyword id="KW-0678">Repressor</keyword>
<keyword id="KW-0804">Transcription</keyword>
<keyword id="KW-0805">Transcription regulation</keyword>
<organism>
    <name type="scientific">Chlamydia trachomatis serovar A (strain ATCC VR-571B / DSM 19440 / HAR-13)</name>
    <dbReference type="NCBI Taxonomy" id="315277"/>
    <lineage>
        <taxon>Bacteria</taxon>
        <taxon>Pseudomonadati</taxon>
        <taxon>Chlamydiota</taxon>
        <taxon>Chlamydiia</taxon>
        <taxon>Chlamydiales</taxon>
        <taxon>Chlamydiaceae</taxon>
        <taxon>Chlamydia/Chlamydophila group</taxon>
        <taxon>Chlamydia</taxon>
    </lineage>
</organism>
<dbReference type="EMBL" id="CP000051">
    <property type="protein sequence ID" value="AAX50426.1"/>
    <property type="molecule type" value="Genomic_DNA"/>
</dbReference>
<dbReference type="RefSeq" id="WP_009871513.1">
    <property type="nucleotide sequence ID" value="NC_007429.1"/>
</dbReference>
<dbReference type="SMR" id="Q3KMJ6"/>
<dbReference type="KEGG" id="cta:CTA_0182"/>
<dbReference type="HOGENOM" id="CLU_147939_0_2_0"/>
<dbReference type="Proteomes" id="UP000002532">
    <property type="component" value="Chromosome"/>
</dbReference>
<dbReference type="GO" id="GO:0005737">
    <property type="term" value="C:cytoplasm"/>
    <property type="evidence" value="ECO:0007669"/>
    <property type="project" value="UniProtKB-SubCell"/>
</dbReference>
<dbReference type="GO" id="GO:0003700">
    <property type="term" value="F:DNA-binding transcription factor activity"/>
    <property type="evidence" value="ECO:0007669"/>
    <property type="project" value="InterPro"/>
</dbReference>
<dbReference type="GO" id="GO:0043565">
    <property type="term" value="F:sequence-specific DNA binding"/>
    <property type="evidence" value="ECO:0007669"/>
    <property type="project" value="InterPro"/>
</dbReference>
<dbReference type="GO" id="GO:0045892">
    <property type="term" value="P:negative regulation of DNA-templated transcription"/>
    <property type="evidence" value="ECO:0007669"/>
    <property type="project" value="UniProtKB-UniRule"/>
</dbReference>
<dbReference type="FunFam" id="1.10.1270.10:FF:000004">
    <property type="entry name" value="Trp operon repressor homolog"/>
    <property type="match status" value="1"/>
</dbReference>
<dbReference type="Gene3D" id="1.10.1270.10">
    <property type="entry name" value="TrpR-like"/>
    <property type="match status" value="1"/>
</dbReference>
<dbReference type="HAMAP" id="MF_00475">
    <property type="entry name" value="Trp_repressor"/>
    <property type="match status" value="1"/>
</dbReference>
<dbReference type="InterPro" id="IPR000831">
    <property type="entry name" value="Trp_repress"/>
</dbReference>
<dbReference type="InterPro" id="IPR013335">
    <property type="entry name" value="Trp_repress_bac"/>
</dbReference>
<dbReference type="InterPro" id="IPR010921">
    <property type="entry name" value="Trp_repressor/repl_initiator"/>
</dbReference>
<dbReference type="InterPro" id="IPR038116">
    <property type="entry name" value="TrpR-like_sf"/>
</dbReference>
<dbReference type="NCBIfam" id="TIGR01321">
    <property type="entry name" value="TrpR"/>
    <property type="match status" value="1"/>
</dbReference>
<dbReference type="PANTHER" id="PTHR38025">
    <property type="entry name" value="TRP OPERON REPRESSOR"/>
    <property type="match status" value="1"/>
</dbReference>
<dbReference type="PANTHER" id="PTHR38025:SF1">
    <property type="entry name" value="TRP OPERON REPRESSOR"/>
    <property type="match status" value="1"/>
</dbReference>
<dbReference type="Pfam" id="PF01371">
    <property type="entry name" value="Trp_repressor"/>
    <property type="match status" value="1"/>
</dbReference>
<dbReference type="PIRSF" id="PIRSF003196">
    <property type="entry name" value="Trp_repressor"/>
    <property type="match status" value="1"/>
</dbReference>
<dbReference type="SUPFAM" id="SSF48295">
    <property type="entry name" value="TrpR-like"/>
    <property type="match status" value="1"/>
</dbReference>
<protein>
    <recommendedName>
        <fullName evidence="1">Trp operon repressor homolog</fullName>
    </recommendedName>
</protein>